<name>PLPL7_CAEEL</name>
<sequence length="1353" mass="152396">MSFFYSLFAPLIFLVTFIYNHVLLILFTVCIIGAAAFFVSYYLFGYSNTPSSASSSATPSSRNSPNKERSKKVPTILETDNEDDEIRVNGSPKSGTPTNTQTIEPPTSLNLNMVNSASGSNLSGARRMRKRDWAKKLYKSLVQDSPGRTPTDESSDEENANVVMGGGSVPRRRSKHGNSSRRRQSTAFQLAKDLIRRGSRSYFRQNQENNKDTRVRPPQEFFEPTDLPEIPQNLQPEIFYILHNLKMLELPSEWKLDPREIEVRSFQAGDYIVKPGESDDAIYVAIDGELTVHIRHMEGKEYLVKCIPAGGSFFSLLSMLDILMDFPSIFRTVALKAADPCRVAKFPITSFRESYHKNPEAWIRPIQIVITRLLHVTLTTLHQYMGLSSELMRRRRDDDRHRNGSSTSKLQLSLSLKKKEKPFNINDNEQDQLIVARKWMAEAFGLVADDVVSEQIGSKIHLESYEAGHVIIEQGAEEEVLMMVLHGNLILAQYGSDFFAQIERESLFDEENNEEDESAVIRVTARELVGGLQILTNEPSFYTIRAAVQTRVAIMKKKDFSAFLEAHPEIYLPVAHSVLRRLSPFLRGVDFALDWVLVDSGHACYRAGDMADSLFVVLSGRLRSVEKKTVVEEFGRGDVLGMMEVLTKKPRATTVLAVRFSQLARVPEGLLNFIKMQYPQVGFRLVQLLGQYYSQTNRRAPFAAPTVIRTNELGATDPMSHIKNLHTIAVVPASPDVPLVPFTCELYHALSSNLRVLRLSSQKVAACLDPSVLEKQADFRLMHWLNVQEDTYPLVIYECDFTQTNWTRRCLRQADAILVVAIGGKTPEKQTLMRELMNMNQDGVRTNKELILLWPESTKTPSGTIEWLKNSYFSGHHHIRAPKRMLQWNRKFRKMSRAEVMTPTSVENEVIEYYEKNVFWTPDRRSDFSRLARILTGNAIGLVLGGGGARGAAHVGVLRALREEGIPVDIVGGTSIGSLIGGLYAETPDDVVVETRAASWFNGMSSLWRKLLDLTYAHSAMFTGAQFNFSIKDLFEERLIEDLWISYFCISTDISTSEMRVHRSGPLWAYCRASMSLAGYLPPLCDPQDGHLLLDGGYVNNVPADVMRNLGARCVIACDVGSIEETNLYDYGDSLSGMWVLLKRLNPFGTPPRILNMEEIQSRLAYVSCVRQLEVVKKASYCRYLRPPIEPFKTLDFPKFQEIMELGLKYGREACHELITNDRAGILGDEKETRKFKRQQSRREKPDVSRAVSFTDLAAAMSKIPVVRPTLRHSMSLNPSANGPVGRAGDHFLLDDDLFNDTDYYEEESSQSENGNESFTEDEDLVIGPPSSSSSGGNVSENPRGTTPRPPSS</sequence>
<accession>Q02331</accession>
<accession>Q6LDE9</accession>
<accession>Q6LDF0</accession>
<accession>Q95PX1</accession>
<gene>
    <name evidence="8" type="ORF">ZK370.4</name>
</gene>
<proteinExistence type="inferred from homology"/>
<evidence type="ECO:0000250" key="1">
    <source>
        <dbReference type="UniProtKB" id="A2AJ88"/>
    </source>
</evidence>
<evidence type="ECO:0000255" key="2"/>
<evidence type="ECO:0000255" key="3">
    <source>
        <dbReference type="PROSITE-ProRule" id="PRU00060"/>
    </source>
</evidence>
<evidence type="ECO:0000255" key="4">
    <source>
        <dbReference type="PROSITE-ProRule" id="PRU01161"/>
    </source>
</evidence>
<evidence type="ECO:0000256" key="5">
    <source>
        <dbReference type="SAM" id="MobiDB-lite"/>
    </source>
</evidence>
<evidence type="ECO:0000305" key="6"/>
<evidence type="ECO:0000312" key="7">
    <source>
        <dbReference type="WormBase" id="ZK370.4a"/>
    </source>
</evidence>
<evidence type="ECO:0000312" key="8">
    <source>
        <dbReference type="WormBase" id="ZK370.4b"/>
    </source>
</evidence>
<feature type="chain" id="PRO_0000172529" description="Patatin-like phospholipase domain-containing protein ZK370.4">
    <location>
        <begin position="1"/>
        <end position="1353"/>
    </location>
</feature>
<feature type="transmembrane region" description="Helical" evidence="2">
    <location>
        <begin position="12"/>
        <end position="32"/>
    </location>
</feature>
<feature type="domain" description="PNPLA" evidence="4">
    <location>
        <begin position="942"/>
        <end position="1108"/>
    </location>
</feature>
<feature type="region of interest" description="Disordered" evidence="5">
    <location>
        <begin position="49"/>
        <end position="188"/>
    </location>
</feature>
<feature type="region of interest" description="Disordered" evidence="5">
    <location>
        <begin position="199"/>
        <end position="218"/>
    </location>
</feature>
<feature type="region of interest" description="Disordered" evidence="5">
    <location>
        <begin position="1230"/>
        <end position="1249"/>
    </location>
</feature>
<feature type="region of interest" description="Disordered" evidence="5">
    <location>
        <begin position="1274"/>
        <end position="1293"/>
    </location>
</feature>
<feature type="region of interest" description="Disordered" evidence="5">
    <location>
        <begin position="1305"/>
        <end position="1353"/>
    </location>
</feature>
<feature type="short sequence motif" description="GXGXXG" evidence="4">
    <location>
        <begin position="946"/>
        <end position="951"/>
    </location>
</feature>
<feature type="short sequence motif" description="GXSXG" evidence="4">
    <location>
        <begin position="973"/>
        <end position="977"/>
    </location>
</feature>
<feature type="short sequence motif" description="DGA/G" evidence="4">
    <location>
        <begin position="1095"/>
        <end position="1097"/>
    </location>
</feature>
<feature type="compositionally biased region" description="Low complexity" evidence="5">
    <location>
        <begin position="49"/>
        <end position="64"/>
    </location>
</feature>
<feature type="compositionally biased region" description="Polar residues" evidence="5">
    <location>
        <begin position="91"/>
        <end position="123"/>
    </location>
</feature>
<feature type="compositionally biased region" description="Basic residues" evidence="5">
    <location>
        <begin position="126"/>
        <end position="138"/>
    </location>
</feature>
<feature type="compositionally biased region" description="Basic residues" evidence="5">
    <location>
        <begin position="170"/>
        <end position="184"/>
    </location>
</feature>
<feature type="compositionally biased region" description="Low complexity" evidence="5">
    <location>
        <begin position="1328"/>
        <end position="1337"/>
    </location>
</feature>
<feature type="active site" description="Nucleophile" evidence="4">
    <location>
        <position position="975"/>
    </location>
</feature>
<feature type="active site" description="Proton acceptor" evidence="4">
    <location>
        <position position="1095"/>
    </location>
</feature>
<feature type="binding site" evidence="3">
    <location>
        <begin position="245"/>
        <end position="372"/>
    </location>
    <ligand>
        <name>a nucleoside 3',5'-cyclic phosphate</name>
        <dbReference type="ChEBI" id="CHEBI:58464"/>
        <label>1</label>
    </ligand>
</feature>
<feature type="binding site" evidence="3">
    <location>
        <begin position="444"/>
        <end position="581"/>
    </location>
    <ligand>
        <name>a nucleoside 3',5'-cyclic phosphate</name>
        <dbReference type="ChEBI" id="CHEBI:58464"/>
        <label>2</label>
    </ligand>
</feature>
<feature type="binding site" evidence="3">
    <location>
        <begin position="570"/>
        <end position="692"/>
    </location>
    <ligand>
        <name>a nucleoside 3',5'-cyclic phosphate</name>
        <dbReference type="ChEBI" id="CHEBI:58464"/>
        <label>3</label>
    </ligand>
</feature>
<feature type="splice variant" id="VSP_006718" description="In isoform a." evidence="6">
    <location>
        <begin position="494"/>
        <end position="504"/>
    </location>
</feature>
<reference key="1">
    <citation type="journal article" date="1994" name="Nature">
        <title>2.2 Mb of contiguous nucleotide sequence from chromosome III of C. elegans.</title>
        <authorList>
            <person name="Wilson R."/>
            <person name="Ainscough R."/>
            <person name="Anderson K."/>
            <person name="Baynes C."/>
            <person name="Berks M."/>
            <person name="Bonfield J."/>
            <person name="Burton J."/>
            <person name="Connell M."/>
            <person name="Copsey T."/>
            <person name="Cooper J."/>
            <person name="Coulson A."/>
            <person name="Craxton M."/>
            <person name="Dear S."/>
            <person name="Du Z."/>
            <person name="Durbin R."/>
            <person name="Favello A."/>
            <person name="Fraser A."/>
            <person name="Fulton L."/>
            <person name="Gardner A."/>
            <person name="Green P."/>
            <person name="Hawkins T."/>
            <person name="Hillier L."/>
            <person name="Jier M."/>
            <person name="Johnston L."/>
            <person name="Jones M."/>
            <person name="Kershaw J."/>
            <person name="Kirsten J."/>
            <person name="Laisster N."/>
            <person name="Latreille P."/>
            <person name="Lightning J."/>
            <person name="Lloyd C."/>
            <person name="Mortimore B."/>
            <person name="O'Callaghan M."/>
            <person name="Parsons J."/>
            <person name="Percy C."/>
            <person name="Rifken L."/>
            <person name="Roopra A."/>
            <person name="Saunders D."/>
            <person name="Shownkeen R."/>
            <person name="Sims M."/>
            <person name="Smaldon N."/>
            <person name="Smith A."/>
            <person name="Smith M."/>
            <person name="Sonnhammer E."/>
            <person name="Staden R."/>
            <person name="Sulston J."/>
            <person name="Thierry-Mieg J."/>
            <person name="Thomas K."/>
            <person name="Vaudin M."/>
            <person name="Vaughan K."/>
            <person name="Waterston R."/>
            <person name="Watson A."/>
            <person name="Weinstock L."/>
            <person name="Wilkinson-Sproat J."/>
            <person name="Wohldman P."/>
        </authorList>
    </citation>
    <scope>NUCLEOTIDE SEQUENCE [LARGE SCALE GENOMIC DNA]</scope>
    <source>
        <strain>Bristol N2</strain>
    </source>
</reference>
<reference key="2">
    <citation type="journal article" date="1998" name="Science">
        <title>Genome sequence of the nematode C. elegans: a platform for investigating biology.</title>
        <authorList>
            <consortium name="The C. elegans sequencing consortium"/>
        </authorList>
    </citation>
    <scope>NUCLEOTIDE SEQUENCE [LARGE SCALE GENOMIC DNA]</scope>
    <scope>ALTERNATIVE SPLICING</scope>
    <source>
        <strain>Bristol N2</strain>
    </source>
</reference>
<organism>
    <name type="scientific">Caenorhabditis elegans</name>
    <dbReference type="NCBI Taxonomy" id="6239"/>
    <lineage>
        <taxon>Eukaryota</taxon>
        <taxon>Metazoa</taxon>
        <taxon>Ecdysozoa</taxon>
        <taxon>Nematoda</taxon>
        <taxon>Chromadorea</taxon>
        <taxon>Rhabditida</taxon>
        <taxon>Rhabditina</taxon>
        <taxon>Rhabditomorpha</taxon>
        <taxon>Rhabditoidea</taxon>
        <taxon>Rhabditidae</taxon>
        <taxon>Peloderinae</taxon>
        <taxon>Caenorhabditis</taxon>
    </lineage>
</organism>
<protein>
    <recommendedName>
        <fullName evidence="6">Patatin-like phospholipase domain-containing protein ZK370.4</fullName>
        <ecNumber evidence="1">3.1.1.-</ecNumber>
    </recommendedName>
</protein>
<comment type="subcellular location">
    <subcellularLocation>
        <location evidence="6">Membrane</location>
        <topology evidence="6">Single-pass membrane protein</topology>
    </subcellularLocation>
</comment>
<comment type="alternative products">
    <event type="alternative splicing"/>
    <isoform>
        <id>Q02331-1</id>
        <name evidence="8">b</name>
        <sequence type="displayed"/>
    </isoform>
    <isoform>
        <id>Q02331-2</id>
        <name evidence="7">a</name>
        <sequence type="described" ref="VSP_006718"/>
    </isoform>
</comment>
<comment type="similarity">
    <text evidence="6">Belongs to the NTE family.</text>
</comment>
<keyword id="KW-0025">Alternative splicing</keyword>
<keyword id="KW-0378">Hydrolase</keyword>
<keyword id="KW-0442">Lipid degradation</keyword>
<keyword id="KW-0443">Lipid metabolism</keyword>
<keyword id="KW-0472">Membrane</keyword>
<keyword id="KW-1185">Reference proteome</keyword>
<keyword id="KW-0677">Repeat</keyword>
<keyword id="KW-0812">Transmembrane</keyword>
<keyword id="KW-1133">Transmembrane helix</keyword>
<dbReference type="EC" id="3.1.1.-" evidence="1"/>
<dbReference type="EMBL" id="BX284603">
    <property type="protein sequence ID" value="CCD61723.1"/>
    <property type="molecule type" value="Genomic_DNA"/>
</dbReference>
<dbReference type="EMBL" id="BX284603">
    <property type="protein sequence ID" value="CCD61724.1"/>
    <property type="molecule type" value="Genomic_DNA"/>
</dbReference>
<dbReference type="PIR" id="S44665">
    <property type="entry name" value="S44665"/>
</dbReference>
<dbReference type="RefSeq" id="NP_498926.2">
    <molecule id="Q02331-2"/>
    <property type="nucleotide sequence ID" value="NM_066525.3"/>
</dbReference>
<dbReference type="RefSeq" id="NP_498927.2">
    <molecule id="Q02331-1"/>
    <property type="nucleotide sequence ID" value="NM_066526.6"/>
</dbReference>
<dbReference type="SMR" id="Q02331"/>
<dbReference type="FunCoup" id="Q02331">
    <property type="interactions" value="1728"/>
</dbReference>
<dbReference type="STRING" id="6239.ZK370.4b.1"/>
<dbReference type="iPTMnet" id="Q02331"/>
<dbReference type="PaxDb" id="6239-ZK370.4b"/>
<dbReference type="PeptideAtlas" id="Q02331"/>
<dbReference type="EnsemblMetazoa" id="ZK370.4a.1">
    <molecule id="Q02331-2"/>
    <property type="protein sequence ID" value="ZK370.4a.1"/>
    <property type="gene ID" value="WBGene00022718"/>
</dbReference>
<dbReference type="EnsemblMetazoa" id="ZK370.4b.1">
    <molecule id="Q02331-1"/>
    <property type="protein sequence ID" value="ZK370.4b.1"/>
    <property type="gene ID" value="WBGene00022718"/>
</dbReference>
<dbReference type="GeneID" id="176225"/>
<dbReference type="KEGG" id="cel:CELE_ZK370.4"/>
<dbReference type="UCSC" id="ZK370.4b">
    <molecule id="Q02331-1"/>
    <property type="organism name" value="c. elegans"/>
</dbReference>
<dbReference type="AGR" id="WB:WBGene00022718"/>
<dbReference type="CTD" id="176225"/>
<dbReference type="WormBase" id="ZK370.4a">
    <molecule id="Q02331-2"/>
    <property type="protein sequence ID" value="CE34454"/>
    <property type="gene ID" value="WBGene00022718"/>
</dbReference>
<dbReference type="WormBase" id="ZK370.4b">
    <molecule id="Q02331-1"/>
    <property type="protein sequence ID" value="CE34455"/>
    <property type="gene ID" value="WBGene00022718"/>
</dbReference>
<dbReference type="eggNOG" id="KOG2968">
    <property type="taxonomic scope" value="Eukaryota"/>
</dbReference>
<dbReference type="GeneTree" id="ENSGT00940000168388"/>
<dbReference type="InParanoid" id="Q02331"/>
<dbReference type="OMA" id="DDYCEYI"/>
<dbReference type="OrthoDB" id="421051at2759"/>
<dbReference type="PhylomeDB" id="Q02331"/>
<dbReference type="Reactome" id="R-CEL-6814848">
    <property type="pathway name" value="Glycerophospholipid catabolism"/>
</dbReference>
<dbReference type="PRO" id="PR:Q02331"/>
<dbReference type="Proteomes" id="UP000001940">
    <property type="component" value="Chromosome III"/>
</dbReference>
<dbReference type="Bgee" id="WBGene00022718">
    <property type="expression patterns" value="Expressed in germ line (C elegans) and 4 other cell types or tissues"/>
</dbReference>
<dbReference type="GO" id="GO:0005783">
    <property type="term" value="C:endoplasmic reticulum"/>
    <property type="evidence" value="ECO:0000318"/>
    <property type="project" value="GO_Central"/>
</dbReference>
<dbReference type="GO" id="GO:0016020">
    <property type="term" value="C:membrane"/>
    <property type="evidence" value="ECO:0007669"/>
    <property type="project" value="UniProtKB-SubCell"/>
</dbReference>
<dbReference type="GO" id="GO:0004622">
    <property type="term" value="F:lysophospholipase activity"/>
    <property type="evidence" value="ECO:0000318"/>
    <property type="project" value="GO_Central"/>
</dbReference>
<dbReference type="GO" id="GO:0016042">
    <property type="term" value="P:lipid catabolic process"/>
    <property type="evidence" value="ECO:0007669"/>
    <property type="project" value="UniProtKB-KW"/>
</dbReference>
<dbReference type="GO" id="GO:0046470">
    <property type="term" value="P:phosphatidylcholine metabolic process"/>
    <property type="evidence" value="ECO:0007669"/>
    <property type="project" value="InterPro"/>
</dbReference>
<dbReference type="CDD" id="cd00038">
    <property type="entry name" value="CAP_ED"/>
    <property type="match status" value="3"/>
</dbReference>
<dbReference type="FunFam" id="3.40.1090.10:FF:000001">
    <property type="entry name" value="neuropathy target esterase isoform X2"/>
    <property type="match status" value="1"/>
</dbReference>
<dbReference type="FunFam" id="2.60.120.10:FF:000236">
    <property type="entry name" value="Uncharacterized NTE family protein ZK370.4"/>
    <property type="match status" value="1"/>
</dbReference>
<dbReference type="Gene3D" id="3.40.1090.10">
    <property type="entry name" value="Cytosolic phospholipase A2 catalytic domain"/>
    <property type="match status" value="1"/>
</dbReference>
<dbReference type="Gene3D" id="2.60.120.10">
    <property type="entry name" value="Jelly Rolls"/>
    <property type="match status" value="3"/>
</dbReference>
<dbReference type="InterPro" id="IPR016035">
    <property type="entry name" value="Acyl_Trfase/lysoPLipase"/>
</dbReference>
<dbReference type="InterPro" id="IPR000595">
    <property type="entry name" value="cNMP-bd_dom"/>
</dbReference>
<dbReference type="InterPro" id="IPR018490">
    <property type="entry name" value="cNMP-bd_dom_sf"/>
</dbReference>
<dbReference type="InterPro" id="IPR001423">
    <property type="entry name" value="LysoPLipase_patatin_CS"/>
</dbReference>
<dbReference type="InterPro" id="IPR050301">
    <property type="entry name" value="NTE"/>
</dbReference>
<dbReference type="InterPro" id="IPR056556">
    <property type="entry name" value="NTE1_P-loop_dom"/>
</dbReference>
<dbReference type="InterPro" id="IPR002641">
    <property type="entry name" value="PNPLA_dom"/>
</dbReference>
<dbReference type="InterPro" id="IPR014710">
    <property type="entry name" value="RmlC-like_jellyroll"/>
</dbReference>
<dbReference type="PANTHER" id="PTHR14226:SF29">
    <property type="entry name" value="NEUROPATHY TARGET ESTERASE SWS"/>
    <property type="match status" value="1"/>
</dbReference>
<dbReference type="PANTHER" id="PTHR14226">
    <property type="entry name" value="NEUROPATHY TARGET ESTERASE/SWISS CHEESE D.MELANOGASTER"/>
    <property type="match status" value="1"/>
</dbReference>
<dbReference type="Pfam" id="PF00027">
    <property type="entry name" value="cNMP_binding"/>
    <property type="match status" value="3"/>
</dbReference>
<dbReference type="Pfam" id="PF24179">
    <property type="entry name" value="NTE_Ploop"/>
    <property type="match status" value="1"/>
</dbReference>
<dbReference type="Pfam" id="PF01734">
    <property type="entry name" value="Patatin"/>
    <property type="match status" value="1"/>
</dbReference>
<dbReference type="SMART" id="SM00100">
    <property type="entry name" value="cNMP"/>
    <property type="match status" value="2"/>
</dbReference>
<dbReference type="SUPFAM" id="SSF51206">
    <property type="entry name" value="cAMP-binding domain-like"/>
    <property type="match status" value="3"/>
</dbReference>
<dbReference type="SUPFAM" id="SSF52151">
    <property type="entry name" value="FabD/lysophospholipase-like"/>
    <property type="match status" value="1"/>
</dbReference>
<dbReference type="PROSITE" id="PS50042">
    <property type="entry name" value="CNMP_BINDING_3"/>
    <property type="match status" value="3"/>
</dbReference>
<dbReference type="PROSITE" id="PS51635">
    <property type="entry name" value="PNPLA"/>
    <property type="match status" value="1"/>
</dbReference>
<dbReference type="PROSITE" id="PS01237">
    <property type="entry name" value="UPF0028"/>
    <property type="match status" value="1"/>
</dbReference>